<gene>
    <name type="primary">Hspa4l</name>
    <name type="synonym">Apg1</name>
    <name type="synonym">Hsp4l</name>
    <name evidence="1" type="synonym">Hsph3</name>
    <name type="synonym">Osp94</name>
</gene>
<feature type="chain" id="PRO_0000078282" description="Heat shock 70 kDa protein 4L">
    <location>
        <begin position="1"/>
        <end position="24" status="greater than"/>
    </location>
</feature>
<feature type="modified residue" description="Phosphothreonine" evidence="1">
    <location>
        <position position="19"/>
    </location>
</feature>
<feature type="non-consecutive residues" evidence="6">
    <location>
        <begin position="15"/>
        <end position="16"/>
    </location>
</feature>
<feature type="non-terminal residue" evidence="6">
    <location>
        <position position="24"/>
    </location>
</feature>
<comment type="function">
    <text evidence="3">Possesses chaperone activity in vitro where it inhibits aggregation of citrate synthase.</text>
</comment>
<comment type="subunit">
    <text evidence="5">Homodimer. In the testis, forms a complex with p53 at 32.5 degrees Celsius which is scrotal temperature but not at 37 or 42 degrees Celsius.</text>
</comment>
<comment type="subcellular location">
    <subcellularLocation>
        <location>Cytoplasm</location>
    </subcellularLocation>
    <subcellularLocation>
        <location>Nucleus</location>
    </subcellularLocation>
    <text>May translocate to the nucleus of germ cells after heat shock.</text>
</comment>
<comment type="tissue specificity">
    <text evidence="2 3 5">Expressed at high levels in testis and at much lower levels in brain. In testis, expressed mainly in germ cells. Widespread in brain with highest expression in cerebellum and medulla oblongata. Also expressed in renal medulla of water-restricted animals.</text>
</comment>
<comment type="developmental stage">
    <text evidence="3 4">Expression is first detected in the testis 5 weeks after birth and coincides with the appearance of spermatozoa. In the brain, expression is first detected 3.5 days after birth.</text>
</comment>
<comment type="induction">
    <text evidence="2">By heat shock.</text>
</comment>
<comment type="similarity">
    <text evidence="6">Belongs to the heat shock protein 70 family.</text>
</comment>
<organism evidence="6">
    <name type="scientific">Rattus norvegicus</name>
    <name type="common">Rat</name>
    <dbReference type="NCBI Taxonomy" id="10116"/>
    <lineage>
        <taxon>Eukaryota</taxon>
        <taxon>Metazoa</taxon>
        <taxon>Chordata</taxon>
        <taxon>Craniata</taxon>
        <taxon>Vertebrata</taxon>
        <taxon>Euteleostomi</taxon>
        <taxon>Mammalia</taxon>
        <taxon>Eutheria</taxon>
        <taxon>Euarchontoglires</taxon>
        <taxon>Glires</taxon>
        <taxon>Rodentia</taxon>
        <taxon>Myomorpha</taxon>
        <taxon>Muroidea</taxon>
        <taxon>Muridae</taxon>
        <taxon>Murinae</taxon>
        <taxon>Rattus</taxon>
    </lineage>
</organism>
<sequence length="24" mass="2796">LSAMLEDTENWLYEELSLTQDPVV</sequence>
<dbReference type="UCSC" id="RGD:1306528">
    <property type="organism name" value="rat"/>
</dbReference>
<dbReference type="AGR" id="RGD:1306528"/>
<dbReference type="RGD" id="1306528">
    <property type="gene designation" value="Hspa4l"/>
</dbReference>
<dbReference type="InParanoid" id="P83581"/>
<dbReference type="PRO" id="PR:P83581"/>
<dbReference type="Proteomes" id="UP000002494">
    <property type="component" value="Unplaced"/>
</dbReference>
<dbReference type="GO" id="GO:0005737">
    <property type="term" value="C:cytoplasm"/>
    <property type="evidence" value="ECO:0000314"/>
    <property type="project" value="UniProtKB"/>
</dbReference>
<dbReference type="GO" id="GO:0005829">
    <property type="term" value="C:cytosol"/>
    <property type="evidence" value="ECO:0000266"/>
    <property type="project" value="RGD"/>
</dbReference>
<dbReference type="GO" id="GO:0005634">
    <property type="term" value="C:nucleus"/>
    <property type="evidence" value="ECO:0000314"/>
    <property type="project" value="UniProtKB"/>
</dbReference>
<dbReference type="GO" id="GO:0005524">
    <property type="term" value="F:ATP binding"/>
    <property type="evidence" value="ECO:0000314"/>
    <property type="project" value="UniProtKB"/>
</dbReference>
<dbReference type="GO" id="GO:0006457">
    <property type="term" value="P:protein folding"/>
    <property type="evidence" value="ECO:0000314"/>
    <property type="project" value="UniProtKB"/>
</dbReference>
<dbReference type="GO" id="GO:0006986">
    <property type="term" value="P:response to unfolded protein"/>
    <property type="evidence" value="ECO:0000314"/>
    <property type="project" value="UniProtKB"/>
</dbReference>
<proteinExistence type="evidence at protein level"/>
<keyword id="KW-0067">ATP-binding</keyword>
<keyword id="KW-0143">Chaperone</keyword>
<keyword id="KW-0963">Cytoplasm</keyword>
<keyword id="KW-0903">Direct protein sequencing</keyword>
<keyword id="KW-0547">Nucleotide-binding</keyword>
<keyword id="KW-0539">Nucleus</keyword>
<keyword id="KW-0597">Phosphoprotein</keyword>
<keyword id="KW-1185">Reference proteome</keyword>
<keyword id="KW-0346">Stress response</keyword>
<accession>P83581</accession>
<protein>
    <recommendedName>
        <fullName>Heat shock 70 kDa protein 4L</fullName>
    </recommendedName>
    <alternativeName>
        <fullName>Heat shock 70-related protein APG-1</fullName>
    </alternativeName>
    <alternativeName>
        <fullName>Osmotic stress protein 94</fullName>
    </alternativeName>
</protein>
<reference evidence="6" key="1">
    <citation type="journal article" date="2002" name="Eur. J. Biochem.">
        <title>Characterization of the 105-kDa molecular chaperone. Identification, biochemical properties, and localization.</title>
        <authorList>
            <person name="Matsumori M."/>
            <person name="Itoh H."/>
            <person name="Toyoshima I."/>
            <person name="Komatsuda A."/>
            <person name="Sawada K."/>
            <person name="Fukuda J."/>
            <person name="Tanaka T."/>
            <person name="Okubo A."/>
            <person name="Kinouchi H."/>
            <person name="Mizoi K."/>
            <person name="Hama T."/>
            <person name="Suzuki A."/>
            <person name="Hamada F."/>
            <person name="Otaka M."/>
            <person name="Shoji Y."/>
            <person name="Takada G."/>
        </authorList>
    </citation>
    <scope>PROTEIN SEQUENCE</scope>
    <scope>FUNCTION</scope>
    <scope>SUBCELLULAR LOCATION</scope>
    <scope>TISSUE SPECIFICITY</scope>
    <scope>DEVELOPMENTAL STAGE</scope>
    <source>
        <tissue evidence="3">Testis</tissue>
    </source>
</reference>
<reference evidence="6" key="2">
    <citation type="journal article" date="1990" name="Eur. J. Biochem.">
        <title>A novel testis-specific 105-kDa protein related to the 90-kDa heat-shock protein.</title>
        <authorList>
            <person name="Itoh H."/>
            <person name="Tashima Y."/>
        </authorList>
    </citation>
    <scope>SUBUNIT</scope>
    <scope>TISSUE SPECIFICITY</scope>
</reference>
<reference evidence="6" key="3">
    <citation type="journal article" date="1991" name="FEBS Lett.">
        <title>Different expression time of the 105-kDa protein and 90-kDa heat-shock protein in rat testis.</title>
        <authorList>
            <person name="Itoh H."/>
            <person name="Tashima Y."/>
        </authorList>
    </citation>
    <scope>DEVELOPMENTAL STAGE</scope>
</reference>
<reference evidence="6" key="4">
    <citation type="journal article" date="2000" name="Eur. J. Biochem.">
        <title>Germ cell-specific heat shock protein 105 binds to p53 in a temperature-sensitive manner in rat testis.</title>
        <authorList>
            <person name="Kumagai J."/>
            <person name="Fukuda J."/>
            <person name="Kodama H."/>
            <person name="Murata M."/>
            <person name="Kawamura K."/>
            <person name="Itoh H."/>
            <person name="Tanaka T."/>
        </authorList>
    </citation>
    <scope>SUBCELLULAR LOCATION</scope>
    <scope>TISSUE SPECIFICITY</scope>
    <scope>INDUCTION</scope>
    <scope>FORMATION OF COMPLEX WITH P53</scope>
    <source>
        <strain evidence="2">Wistar</strain>
        <tissue evidence="2">Testis</tissue>
    </source>
</reference>
<evidence type="ECO:0000250" key="1">
    <source>
        <dbReference type="UniProtKB" id="O95757"/>
    </source>
</evidence>
<evidence type="ECO:0000269" key="2">
    <source>
    </source>
</evidence>
<evidence type="ECO:0000269" key="3">
    <source>
    </source>
</evidence>
<evidence type="ECO:0000269" key="4">
    <source>
    </source>
</evidence>
<evidence type="ECO:0000269" key="5">
    <source>
    </source>
</evidence>
<evidence type="ECO:0000305" key="6"/>
<name>HS74L_RAT</name>